<dbReference type="EC" id="2.7.1.73" evidence="1 2 5"/>
<dbReference type="EMBL" id="L35149">
    <property type="protein sequence ID" value="AAC36932.1"/>
    <property type="molecule type" value="Genomic_DNA"/>
</dbReference>
<dbReference type="EMBL" id="D00798">
    <property type="protein sequence ID" value="BAA00690.1"/>
    <property type="molecule type" value="Genomic_DNA"/>
</dbReference>
<dbReference type="EMBL" id="U82664">
    <property type="protein sequence ID" value="AAB40231.1"/>
    <property type="molecule type" value="Genomic_DNA"/>
</dbReference>
<dbReference type="EMBL" id="U00096">
    <property type="protein sequence ID" value="AAC73579.1"/>
    <property type="molecule type" value="Genomic_DNA"/>
</dbReference>
<dbReference type="EMBL" id="AP009048">
    <property type="protein sequence ID" value="BAE76256.1"/>
    <property type="molecule type" value="Genomic_DNA"/>
</dbReference>
<dbReference type="EMBL" id="D90259">
    <property type="protein sequence ID" value="BAA14306.1"/>
    <property type="status" value="ALT_FRAME"/>
    <property type="molecule type" value="Genomic_DNA"/>
</dbReference>
<dbReference type="PIR" id="JQ0812">
    <property type="entry name" value="JQ0812"/>
</dbReference>
<dbReference type="RefSeq" id="NP_415010.1">
    <property type="nucleotide sequence ID" value="NC_000913.3"/>
</dbReference>
<dbReference type="RefSeq" id="WP_000671574.1">
    <property type="nucleotide sequence ID" value="NZ_STEB01000007.1"/>
</dbReference>
<dbReference type="PDB" id="6VWO">
    <property type="method" value="X-ray"/>
    <property type="resolution" value="1.78 A"/>
    <property type="chains" value="A=1-434"/>
</dbReference>
<dbReference type="PDB" id="6VWP">
    <property type="method" value="X-ray"/>
    <property type="resolution" value="3.45 A"/>
    <property type="chains" value="A/B/C/D/E/F/G/H=1-434"/>
</dbReference>
<dbReference type="PDBsum" id="6VWO"/>
<dbReference type="PDBsum" id="6VWP"/>
<dbReference type="SMR" id="P0AEW6"/>
<dbReference type="BioGRID" id="4259850">
    <property type="interactions" value="12"/>
</dbReference>
<dbReference type="BioGRID" id="850931">
    <property type="interactions" value="3"/>
</dbReference>
<dbReference type="DIP" id="DIP-48148N"/>
<dbReference type="FunCoup" id="P0AEW6">
    <property type="interactions" value="400"/>
</dbReference>
<dbReference type="IntAct" id="P0AEW6">
    <property type="interactions" value="9"/>
</dbReference>
<dbReference type="STRING" id="511145.b0477"/>
<dbReference type="jPOST" id="P0AEW6"/>
<dbReference type="PaxDb" id="511145-b0477"/>
<dbReference type="EnsemblBacteria" id="AAC73579">
    <property type="protein sequence ID" value="AAC73579"/>
    <property type="gene ID" value="b0477"/>
</dbReference>
<dbReference type="GeneID" id="93776973"/>
<dbReference type="GeneID" id="946584"/>
<dbReference type="KEGG" id="ecj:JW0466"/>
<dbReference type="KEGG" id="eco:b0477"/>
<dbReference type="PATRIC" id="fig|1411691.4.peg.1799"/>
<dbReference type="EchoBASE" id="EB1094"/>
<dbReference type="eggNOG" id="COG0524">
    <property type="taxonomic scope" value="Bacteria"/>
</dbReference>
<dbReference type="HOGENOM" id="CLU_060237_0_0_6"/>
<dbReference type="InParanoid" id="P0AEW6"/>
<dbReference type="OMA" id="LLGVMCN"/>
<dbReference type="OrthoDB" id="5288159at2"/>
<dbReference type="PhylomeDB" id="P0AEW6"/>
<dbReference type="BioCyc" id="EcoCyc:GSK-MONOMER"/>
<dbReference type="BioCyc" id="MetaCyc:GSK-MONOMER"/>
<dbReference type="BRENDA" id="2.7.1.73">
    <property type="organism ID" value="2026"/>
</dbReference>
<dbReference type="UniPathway" id="UPA00591">
    <property type="reaction ID" value="UER00647"/>
</dbReference>
<dbReference type="UniPathway" id="UPA00909"/>
<dbReference type="PRO" id="PR:P0AEW6"/>
<dbReference type="Proteomes" id="UP000000625">
    <property type="component" value="Chromosome"/>
</dbReference>
<dbReference type="GO" id="GO:0005524">
    <property type="term" value="F:ATP binding"/>
    <property type="evidence" value="ECO:0007669"/>
    <property type="project" value="UniProtKB-UniRule"/>
</dbReference>
<dbReference type="GO" id="GO:0106366">
    <property type="term" value="F:guanosine kinase activity"/>
    <property type="evidence" value="ECO:0000314"/>
    <property type="project" value="EcoCyc"/>
</dbReference>
<dbReference type="GO" id="GO:0097216">
    <property type="term" value="F:guanosine tetraphosphate binding"/>
    <property type="evidence" value="ECO:0000314"/>
    <property type="project" value="EcoCyc"/>
</dbReference>
<dbReference type="GO" id="GO:0008906">
    <property type="term" value="F:inosine kinase activity"/>
    <property type="evidence" value="ECO:0000314"/>
    <property type="project" value="EcoCyc"/>
</dbReference>
<dbReference type="GO" id="GO:0032263">
    <property type="term" value="P:GMP salvage"/>
    <property type="evidence" value="ECO:0000315"/>
    <property type="project" value="EcoCyc"/>
</dbReference>
<dbReference type="GO" id="GO:0032264">
    <property type="term" value="P:IMP salvage"/>
    <property type="evidence" value="ECO:0000315"/>
    <property type="project" value="EcoCyc"/>
</dbReference>
<dbReference type="GO" id="GO:0006166">
    <property type="term" value="P:purine ribonucleoside salvage"/>
    <property type="evidence" value="ECO:0007669"/>
    <property type="project" value="UniProtKB-KW"/>
</dbReference>
<dbReference type="Gene3D" id="3.40.1190.20">
    <property type="match status" value="1"/>
</dbReference>
<dbReference type="HAMAP" id="MF_02246">
    <property type="entry name" value="Gua_Ino_kinase"/>
    <property type="match status" value="1"/>
</dbReference>
<dbReference type="InterPro" id="IPR052700">
    <property type="entry name" value="Carb_kinase_PfkB-like"/>
</dbReference>
<dbReference type="InterPro" id="IPR002173">
    <property type="entry name" value="Carboh/pur_kinase_PfkB_CS"/>
</dbReference>
<dbReference type="InterPro" id="IPR046405">
    <property type="entry name" value="IngK"/>
</dbReference>
<dbReference type="InterPro" id="IPR011611">
    <property type="entry name" value="PfkB_dom"/>
</dbReference>
<dbReference type="InterPro" id="IPR029056">
    <property type="entry name" value="Ribokinase-like"/>
</dbReference>
<dbReference type="NCBIfam" id="NF011655">
    <property type="entry name" value="PRK15074.1"/>
    <property type="match status" value="1"/>
</dbReference>
<dbReference type="PANTHER" id="PTHR43320:SF3">
    <property type="entry name" value="CARBOHYDRATE KINASE PFKB DOMAIN-CONTAINING PROTEIN"/>
    <property type="match status" value="1"/>
</dbReference>
<dbReference type="PANTHER" id="PTHR43320">
    <property type="entry name" value="SUGAR KINASE"/>
    <property type="match status" value="1"/>
</dbReference>
<dbReference type="Pfam" id="PF00294">
    <property type="entry name" value="PfkB"/>
    <property type="match status" value="1"/>
</dbReference>
<dbReference type="SUPFAM" id="SSF53613">
    <property type="entry name" value="Ribokinase-like"/>
    <property type="match status" value="1"/>
</dbReference>
<dbReference type="PROSITE" id="PS00584">
    <property type="entry name" value="PFKB_KINASES_2"/>
    <property type="match status" value="1"/>
</dbReference>
<sequence length="434" mass="48449">MKFPGKRKSKHYFPVNARDPLLQQFQPENETSAAWVVGIDQTLVDIEAKVDDEFIERYGLSAGHSLVIEDDVAEALYQELKQKNLITHQFAGGTIGNTMHNYSVLADDRSVLLGVMCSNIEIGSYAYRYLCNTSSRTDLNYLQGVDGPIGRCFTLIGESGERTFAISPGHMNQLRAESIPEDVIAGASALVLTSYLVRCKPGEPMPEATMKAIEYAKKYNVPVVLTLGTKFVIAENPQWWQQFLKDHVSILAMNEDEAEALTGESDPLLASDKALDWVDLVLCTAGPIGLYMAGFTEDEAKRKTQHPLLPGAIAEFNQYEFSRAMRHKDCQNPLRVYSHIAPYMGGPEKIMNTNGAGDGALAALLHDITANSYHRSNVPNSSKHKFTWLTYSSLAQVCKYANRVSYQVLNQHSPRLTRGLPEREDSLEESYWDR</sequence>
<comment type="function">
    <text evidence="2 5 6">Catalyzes the phosphorylation of guanosine and inosine to GMP and IMP, respectively (PubMed:10879466, PubMed:7665468, PubMed:7721718). Can also use deoxyguanosine and xanthosine, but not adenosine, uridine, cytidine or deoxythymidine (PubMed:10879466, PubMed:7665468). Shows a strong preference for guanosine (PubMed:10879466, PubMed:7665468). dATP can serve as a phosphate donor as well as ATP. Shows weaker activity with UTP and CTP (PubMed:10879466, PubMed:7665468).</text>
</comment>
<comment type="catalytic activity">
    <reaction evidence="1 2 5">
        <text>guanosine + ATP = GMP + ADP + H(+)</text>
        <dbReference type="Rhea" id="RHEA:27710"/>
        <dbReference type="ChEBI" id="CHEBI:15378"/>
        <dbReference type="ChEBI" id="CHEBI:16750"/>
        <dbReference type="ChEBI" id="CHEBI:30616"/>
        <dbReference type="ChEBI" id="CHEBI:58115"/>
        <dbReference type="ChEBI" id="CHEBI:456216"/>
        <dbReference type="EC" id="2.7.1.73"/>
    </reaction>
    <physiologicalReaction direction="left-to-right" evidence="2 5">
        <dbReference type="Rhea" id="RHEA:27711"/>
    </physiologicalReaction>
</comment>
<comment type="catalytic activity">
    <reaction evidence="1 2 5">
        <text>inosine + ATP = IMP + ADP + H(+)</text>
        <dbReference type="Rhea" id="RHEA:21140"/>
        <dbReference type="ChEBI" id="CHEBI:15378"/>
        <dbReference type="ChEBI" id="CHEBI:17596"/>
        <dbReference type="ChEBI" id="CHEBI:30616"/>
        <dbReference type="ChEBI" id="CHEBI:58053"/>
        <dbReference type="ChEBI" id="CHEBI:456216"/>
        <dbReference type="EC" id="2.7.1.73"/>
    </reaction>
    <physiologicalReaction direction="left-to-right" evidence="2 5">
        <dbReference type="Rhea" id="RHEA:21141"/>
    </physiologicalReaction>
</comment>
<comment type="cofactor">
    <cofactor evidence="1 2 5">
        <name>Mg(2+)</name>
        <dbReference type="ChEBI" id="CHEBI:18420"/>
    </cofactor>
    <text evidence="2">Mg(2+) is probably required for activity in addition to its role in forming the Mg-ATP complex.</text>
</comment>
<comment type="activity regulation">
    <text evidence="2 4 5">Guanosine and inosine kinase activities are both inhibited by ppGpp, a nucleotide messenger universally produced in bacteria following nutrient starvation. ppGpp binds to Gsk, and inhibits its activity by blocking conformational dynamics and inducing tetramerization. Inhibiting purine nucleotide synthesis is required during starvation to maintain levels of the metabolite 5'-phosphoribosyl-1'-diphosphate (pRpp), which is required for the synthesis of histidine and tryptophan (PubMed:32857952). Activity is slightly increased in the presence of pyrimidine nucleotides, while it is markedly inhibited by GDP and GTP (PubMed:10879466). Activity is stimulated by K(+) ions (PubMed:7665468). Guanosine and inosine kinase activities are inhibited by Cu(2+) or Zn(2+) (PubMed:7665468).</text>
</comment>
<comment type="biophysicochemical properties">
    <kinetics>
        <KM evidence="5">6.1 uM for guanosine</KM>
        <KM evidence="2">7.8 uM for guanosine</KM>
        <KM evidence="5">2.1 mM for inosine</KM>
        <KM evidence="2">1.5 mM for inosine</KM>
        <KM evidence="2">4.3 mM for deoxyguanosine</KM>
        <KM evidence="2">0.49 mM for ATP</KM>
        <KM evidence="5">0.51 mM for ATP (for guanosine kinase activity)</KM>
        <KM evidence="5">0.71 mM for ATP (for inosine kinase activity)</KM>
        <KM evidence="5">2.4 mM for dATP (for guanosine kinase activity)</KM>
        <KM evidence="5">0.66 mM for dATP (for inosine kinase activity)</KM>
        <Vmax evidence="5">2.9 umol/min/mg enzyme with guanosine as substrate</Vmax>
        <Vmax evidence="5">4.9 umol/min/mg enzyme with inosine as substrate</Vmax>
    </kinetics>
    <phDependence>
        <text evidence="5">Optimum pH is 8.2 for guanosine kinase activity. Optimum pH is 6.9 for inosine kinase activity.</text>
    </phDependence>
    <temperatureDependence>
        <text evidence="5">Optimum temperature is 38 degrees Celsius for guanosine kinase activity and between 26 and 39 degrees Celsius for inosine kinase activity.</text>
    </temperatureDependence>
</comment>
<comment type="pathway">
    <text evidence="1 11">Purine metabolism; IMP biosynthesis via salvage pathway; IMP from inosine: step 1/1.</text>
</comment>
<comment type="pathway">
    <text evidence="1 11">Purine metabolism; GMP biosynthesis via salvage pathway.</text>
</comment>
<comment type="subunit">
    <text evidence="2">Homodimer.</text>
</comment>
<comment type="interaction">
    <interactant intactId="EBI-548746">
        <id>P0AEW6</id>
    </interactant>
    <interactant intactId="EBI-550390">
        <id>P75767</id>
        <label>ybhK</label>
    </interactant>
    <organismsDiffer>false</organismsDiffer>
    <experiments>5</experiments>
</comment>
<comment type="disruption phenotype">
    <text evidence="3">Disruption of the gene causes a considerable amount of guanosine accumulation together with a slight increase in the inosine productivity.</text>
</comment>
<comment type="similarity">
    <text evidence="1 10">Belongs to the carbohydrate kinase PfkB family.</text>
</comment>
<comment type="sequence caution" evidence="10">
    <conflict type="frameshift">
        <sequence resource="EMBL-CDS" id="BAA14306"/>
    </conflict>
</comment>
<name>INGK_ECOLI</name>
<accession>P0AEW6</accession>
<accession>P22937</accession>
<accession>Q2MBV0</accession>
<proteinExistence type="evidence at protein level"/>
<reference key="1">
    <citation type="journal article" date="1995" name="J. Bacteriol.">
        <title>Cloning and characterization of the gsk gene encoding guanosine kinase of Escherichia coli.</title>
        <authorList>
            <person name="Harlow K.W."/>
            <person name="Nygaard P."/>
            <person name="Hove-Jensen B."/>
        </authorList>
    </citation>
    <scope>NUCLEOTIDE SEQUENCE [GENOMIC DNA]</scope>
    <scope>PROTEIN SEQUENCE OF 1-10</scope>
    <scope>FUNCTION</scope>
    <source>
        <strain>K12</strain>
    </source>
</reference>
<reference key="2">
    <citation type="journal article" date="1995" name="J. Bacteriol.">
        <title>Cloning of a guanosine-inosine kinase gene of Escherichia coli and characterization of the purified gene product.</title>
        <authorList>
            <person name="Mori H."/>
            <person name="Iida A."/>
            <person name="Teshiba S."/>
            <person name="Fujio T."/>
        </authorList>
    </citation>
    <scope>NUCLEOTIDE SEQUENCE [GENOMIC DNA]</scope>
    <scope>PROTEIN SEQUENCE OF 1-10 AND 400-434</scope>
    <scope>FUNCTION</scope>
    <scope>CATALYTIC ACTIVITY</scope>
    <scope>COFACTOR</scope>
    <scope>ACTIVITY REGULATION</scope>
    <scope>BIOPHYSICOCHEMICAL PROPERTIES</scope>
    <source>
        <strain>K12</strain>
    </source>
</reference>
<reference key="3">
    <citation type="submission" date="1997-01" db="EMBL/GenBank/DDBJ databases">
        <title>Sequence of minutes 4-25 of Escherichia coli.</title>
        <authorList>
            <person name="Chung E."/>
            <person name="Allen E."/>
            <person name="Araujo R."/>
            <person name="Aparicio A.M."/>
            <person name="Davis K."/>
            <person name="Duncan M."/>
            <person name="Federspiel N."/>
            <person name="Hyman R."/>
            <person name="Kalman S."/>
            <person name="Komp C."/>
            <person name="Kurdi O."/>
            <person name="Lew H."/>
            <person name="Lin D."/>
            <person name="Namath A."/>
            <person name="Oefner P."/>
            <person name="Roberts D."/>
            <person name="Schramm S."/>
            <person name="Davis R.W."/>
        </authorList>
    </citation>
    <scope>NUCLEOTIDE SEQUENCE [LARGE SCALE GENOMIC DNA]</scope>
    <source>
        <strain>K12 / MG1655 / ATCC 47076</strain>
    </source>
</reference>
<reference key="4">
    <citation type="journal article" date="1997" name="Science">
        <title>The complete genome sequence of Escherichia coli K-12.</title>
        <authorList>
            <person name="Blattner F.R."/>
            <person name="Plunkett G. III"/>
            <person name="Bloch C.A."/>
            <person name="Perna N.T."/>
            <person name="Burland V."/>
            <person name="Riley M."/>
            <person name="Collado-Vides J."/>
            <person name="Glasner J.D."/>
            <person name="Rode C.K."/>
            <person name="Mayhew G.F."/>
            <person name="Gregor J."/>
            <person name="Davis N.W."/>
            <person name="Kirkpatrick H.A."/>
            <person name="Goeden M.A."/>
            <person name="Rose D.J."/>
            <person name="Mau B."/>
            <person name="Shao Y."/>
        </authorList>
    </citation>
    <scope>NUCLEOTIDE SEQUENCE [LARGE SCALE GENOMIC DNA]</scope>
    <source>
        <strain>K12 / MG1655 / ATCC 47076</strain>
    </source>
</reference>
<reference key="5">
    <citation type="journal article" date="2006" name="Mol. Syst. Biol.">
        <title>Highly accurate genome sequences of Escherichia coli K-12 strains MG1655 and W3110.</title>
        <authorList>
            <person name="Hayashi K."/>
            <person name="Morooka N."/>
            <person name="Yamamoto Y."/>
            <person name="Fujita K."/>
            <person name="Isono K."/>
            <person name="Choi S."/>
            <person name="Ohtsubo E."/>
            <person name="Baba T."/>
            <person name="Wanner B.L."/>
            <person name="Mori H."/>
            <person name="Horiuchi T."/>
        </authorList>
    </citation>
    <scope>NUCLEOTIDE SEQUENCE [LARGE SCALE GENOMIC DNA]</scope>
    <source>
        <strain>K12 / W3110 / ATCC 27325 / DSM 5911</strain>
    </source>
</reference>
<reference key="6">
    <citation type="journal article" date="1991" name="J. Mol. Biol.">
        <title>Isolation and characterization of visible light-sensitive mutants of Escherichia coli K12.</title>
        <authorList>
            <person name="Miyamoto K."/>
            <person name="Nakahigashi K."/>
            <person name="Nishimura K."/>
            <person name="Inokuchi H."/>
        </authorList>
    </citation>
    <scope>NUCLEOTIDE SEQUENCE [GENOMIC DNA] OF 1-316</scope>
    <source>
        <strain>K12</strain>
    </source>
</reference>
<reference key="7">
    <citation type="journal article" date="2000" name="Biosci. Biotechnol. Biochem.">
        <title>End-product regulation and kinetic mechanism of guanosine-inosine kinase from Escherichia coli.</title>
        <authorList>
            <person name="Kawasaki H."/>
            <person name="Shimaoka M."/>
            <person name="Usuda Y."/>
            <person name="Utagawa T."/>
        </authorList>
    </citation>
    <scope>PROTEIN SEQUENCE OF 1-5</scope>
    <scope>FUNCTION</scope>
    <scope>CATALYTIC ACTIVITY</scope>
    <scope>COFACTOR</scope>
    <scope>ACTIVITY REGULATION</scope>
    <scope>BIOPHYSICOCHEMICAL PROPERTIES</scope>
    <scope>SUBUNIT</scope>
    <source>
        <strain>K12 / JM109 / ATCC 53323</strain>
    </source>
</reference>
<reference key="8">
    <citation type="journal article" date="2001" name="Biosci. Biotechnol. Biochem.">
        <title>gsk disruption leads to guanosine accumulation in Escherichia coli.</title>
        <authorList>
            <person name="Matsui H."/>
            <person name="Shimaoka M."/>
            <person name="Takenaka Y."/>
            <person name="Kawasaki H."/>
            <person name="Kurahashi O."/>
        </authorList>
    </citation>
    <scope>PATHWAY</scope>
    <scope>DISRUPTION PHENOTYPE</scope>
</reference>
<reference evidence="13 14" key="9">
    <citation type="journal article" date="2020" name="Mol. Cell">
        <title>ppGpp coordinates nucleotide and amino-acid synthesis in E. coli during starvation.</title>
        <authorList>
            <person name="Wang B."/>
            <person name="Grant R.A."/>
            <person name="Laub M.T."/>
        </authorList>
    </citation>
    <scope>X-RAY CRYSTALLOGRAPHY (1.78 ANGSTROMS) IN COMPLEXES WITH GUANOSINE; ADP AND PPGPP</scope>
    <scope>ACTIVITY REGULATION</scope>
    <scope>MUTAGENESIS OF ARG-7; PHE-321; LYS-383; SER-393 AND GLN-396</scope>
</reference>
<feature type="chain" id="PRO_0000080070" description="Guanosine-inosine kinase">
    <location>
        <begin position="1"/>
        <end position="434"/>
    </location>
</feature>
<feature type="binding site" evidence="1 12">
    <location>
        <begin position="40"/>
        <end position="45"/>
    </location>
    <ligand>
        <name>GMP</name>
        <dbReference type="ChEBI" id="CHEBI:58115"/>
    </ligand>
</feature>
<feature type="binding site" evidence="1 12">
    <location>
        <begin position="93"/>
        <end position="97"/>
    </location>
    <ligand>
        <name>GMP</name>
        <dbReference type="ChEBI" id="CHEBI:58115"/>
    </ligand>
</feature>
<feature type="binding site" evidence="1 12">
    <location>
        <position position="198"/>
    </location>
    <ligand>
        <name>GMP</name>
        <dbReference type="ChEBI" id="CHEBI:58115"/>
    </ligand>
</feature>
<feature type="binding site" evidence="1 12">
    <location>
        <begin position="284"/>
        <end position="289"/>
    </location>
    <ligand>
        <name>ATP</name>
        <dbReference type="ChEBI" id="CHEBI:30616"/>
    </ligand>
</feature>
<feature type="binding site" evidence="1 12">
    <location>
        <position position="357"/>
    </location>
    <ligand>
        <name>ATP</name>
        <dbReference type="ChEBI" id="CHEBI:30616"/>
    </ligand>
</feature>
<feature type="binding site" evidence="1 12">
    <location>
        <position position="402"/>
    </location>
    <ligand>
        <name>ATP</name>
        <dbReference type="ChEBI" id="CHEBI:30616"/>
    </ligand>
</feature>
<feature type="mutagenesis site" description="Mutant is less sensitive to ppGpp inhibition." evidence="4">
    <original>R</original>
    <variation>A</variation>
    <location>
        <position position="7"/>
    </location>
</feature>
<feature type="mutagenesis site" description="Mutant is less sensitive to ppGpp inhibition." evidence="4">
    <original>F</original>
    <variation>A</variation>
    <location>
        <position position="321"/>
    </location>
</feature>
<feature type="mutagenesis site" description="Mutant is insensitive to ppGpp and GDP inhibition. Mutant accumulates abnormally high levels of purine nucleotides following amino-acid starvation, compromising cellular fitness and cell growth." evidence="4">
    <original>K</original>
    <variation>A</variation>
    <location>
        <position position="383"/>
    </location>
</feature>
<feature type="mutagenesis site" description="Mutant is less sensitive to ppGpp inhibition." evidence="4">
    <original>S</original>
    <variation>A</variation>
    <location>
        <position position="393"/>
    </location>
</feature>
<feature type="mutagenesis site" description="Mutant is less sensitive to ppGpp inhibition." evidence="4">
    <original>Q</original>
    <variation>A</variation>
    <location>
        <position position="396"/>
    </location>
</feature>
<feature type="sequence conflict" description="In Ref. 6; BAA14306." evidence="10" ref="6">
    <original>A</original>
    <variation>V</variation>
    <location>
        <position position="314"/>
    </location>
</feature>
<feature type="sequence conflict" description="In Ref. 1; AAC36932." evidence="10" ref="1">
    <original>R</original>
    <variation>P</variation>
    <location>
        <position position="326"/>
    </location>
</feature>
<feature type="sequence conflict" description="In Ref. 1; AAC36932." evidence="10" ref="1">
    <original>LH</original>
    <variation>PD</variation>
    <location>
        <begin position="365"/>
        <end position="366"/>
    </location>
</feature>
<feature type="sequence conflict" description="In Ref. 1; AAC36932." evidence="10" ref="1">
    <original>L</original>
    <variation>S</variation>
    <location>
        <position position="389"/>
    </location>
</feature>
<feature type="sequence conflict" description="In Ref. 1; AAC36932." evidence="10" ref="1">
    <original>PER</original>
    <variation>AV</variation>
    <location>
        <begin position="421"/>
        <end position="423"/>
    </location>
</feature>
<feature type="strand" evidence="16">
    <location>
        <begin position="4"/>
        <end position="6"/>
    </location>
</feature>
<feature type="helix" evidence="16">
    <location>
        <begin position="20"/>
        <end position="23"/>
    </location>
</feature>
<feature type="strand" evidence="15">
    <location>
        <begin position="36"/>
        <end position="39"/>
    </location>
</feature>
<feature type="strand" evidence="15">
    <location>
        <begin position="43"/>
        <end position="49"/>
    </location>
</feature>
<feature type="helix" evidence="15">
    <location>
        <begin position="52"/>
        <end position="57"/>
    </location>
</feature>
<feature type="strand" evidence="15">
    <location>
        <begin position="65"/>
        <end position="67"/>
    </location>
</feature>
<feature type="helix" evidence="15">
    <location>
        <begin position="70"/>
        <end position="82"/>
    </location>
</feature>
<feature type="strand" evidence="15">
    <location>
        <begin position="86"/>
        <end position="91"/>
    </location>
</feature>
<feature type="helix" evidence="15">
    <location>
        <begin position="94"/>
        <end position="106"/>
    </location>
</feature>
<feature type="strand" evidence="15">
    <location>
        <begin position="110"/>
        <end position="119"/>
    </location>
</feature>
<feature type="helix" evidence="15">
    <location>
        <begin position="125"/>
        <end position="132"/>
    </location>
</feature>
<feature type="strand" evidence="15">
    <location>
        <begin position="143"/>
        <end position="147"/>
    </location>
</feature>
<feature type="strand" evidence="15">
    <location>
        <begin position="150"/>
        <end position="156"/>
    </location>
</feature>
<feature type="strand" evidence="16">
    <location>
        <begin position="158"/>
        <end position="160"/>
    </location>
</feature>
<feature type="strand" evidence="15">
    <location>
        <begin position="162"/>
        <end position="167"/>
    </location>
</feature>
<feature type="turn" evidence="15">
    <location>
        <begin position="169"/>
        <end position="172"/>
    </location>
</feature>
<feature type="helix" evidence="15">
    <location>
        <begin position="176"/>
        <end position="178"/>
    </location>
</feature>
<feature type="helix" evidence="15">
    <location>
        <begin position="181"/>
        <end position="185"/>
    </location>
</feature>
<feature type="strand" evidence="15">
    <location>
        <begin position="190"/>
        <end position="193"/>
    </location>
</feature>
<feature type="helix" evidence="15">
    <location>
        <begin position="194"/>
        <end position="197"/>
    </location>
</feature>
<feature type="helix" evidence="15">
    <location>
        <begin position="205"/>
        <end position="218"/>
    </location>
</feature>
<feature type="strand" evidence="15">
    <location>
        <begin position="223"/>
        <end position="226"/>
    </location>
</feature>
<feature type="helix" evidence="15">
    <location>
        <begin position="230"/>
        <end position="233"/>
    </location>
</feature>
<feature type="helix" evidence="15">
    <location>
        <begin position="237"/>
        <end position="247"/>
    </location>
</feature>
<feature type="strand" evidence="15">
    <location>
        <begin position="249"/>
        <end position="254"/>
    </location>
</feature>
<feature type="helix" evidence="15">
    <location>
        <begin position="255"/>
        <end position="262"/>
    </location>
</feature>
<feature type="helix" evidence="15">
    <location>
        <begin position="267"/>
        <end position="274"/>
    </location>
</feature>
<feature type="turn" evidence="15">
    <location>
        <begin position="275"/>
        <end position="277"/>
    </location>
</feature>
<feature type="strand" evidence="15">
    <location>
        <begin position="279"/>
        <end position="284"/>
    </location>
</feature>
<feature type="helix" evidence="15">
    <location>
        <begin position="286"/>
        <end position="288"/>
    </location>
</feature>
<feature type="strand" evidence="15">
    <location>
        <begin position="290"/>
        <end position="297"/>
    </location>
</feature>
<feature type="helix" evidence="15">
    <location>
        <begin position="298"/>
        <end position="300"/>
    </location>
</feature>
<feature type="strand" evidence="15">
    <location>
        <begin position="311"/>
        <end position="313"/>
    </location>
</feature>
<feature type="turn" evidence="15">
    <location>
        <begin position="314"/>
        <end position="321"/>
    </location>
</feature>
<feature type="helix" evidence="15">
    <location>
        <begin position="327"/>
        <end position="329"/>
    </location>
</feature>
<feature type="strand" evidence="15">
    <location>
        <begin position="331"/>
        <end position="340"/>
    </location>
</feature>
<feature type="helix" evidence="16">
    <location>
        <begin position="343"/>
        <end position="345"/>
    </location>
</feature>
<feature type="helix" evidence="15">
    <location>
        <begin position="356"/>
        <end position="376"/>
    </location>
</feature>
<feature type="helix" evidence="15">
    <location>
        <begin position="394"/>
        <end position="409"/>
    </location>
</feature>
<feature type="strand" evidence="15">
    <location>
        <begin position="411"/>
        <end position="415"/>
    </location>
</feature>
<feature type="helix" evidence="16">
    <location>
        <begin position="426"/>
        <end position="433"/>
    </location>
</feature>
<evidence type="ECO:0000255" key="1">
    <source>
        <dbReference type="HAMAP-Rule" id="MF_02246"/>
    </source>
</evidence>
<evidence type="ECO:0000269" key="2">
    <source>
    </source>
</evidence>
<evidence type="ECO:0000269" key="3">
    <source>
    </source>
</evidence>
<evidence type="ECO:0000269" key="4">
    <source>
    </source>
</evidence>
<evidence type="ECO:0000269" key="5">
    <source>
    </source>
</evidence>
<evidence type="ECO:0000269" key="6">
    <source>
    </source>
</evidence>
<evidence type="ECO:0000303" key="7">
    <source>
    </source>
</evidence>
<evidence type="ECO:0000303" key="8">
    <source>
    </source>
</evidence>
<evidence type="ECO:0000303" key="9">
    <source>
    </source>
</evidence>
<evidence type="ECO:0000305" key="10"/>
<evidence type="ECO:0000305" key="11">
    <source>
    </source>
</evidence>
<evidence type="ECO:0000305" key="12">
    <source>
    </source>
</evidence>
<evidence type="ECO:0007744" key="13">
    <source>
        <dbReference type="PDB" id="6VWO"/>
    </source>
</evidence>
<evidence type="ECO:0007744" key="14">
    <source>
        <dbReference type="PDB" id="6VWP"/>
    </source>
</evidence>
<evidence type="ECO:0007829" key="15">
    <source>
        <dbReference type="PDB" id="6VWO"/>
    </source>
</evidence>
<evidence type="ECO:0007829" key="16">
    <source>
        <dbReference type="PDB" id="6VWP"/>
    </source>
</evidence>
<gene>
    <name evidence="1 8 9" type="primary">gsk</name>
    <name type="ordered locus">b0477</name>
    <name type="ordered locus">JW0466</name>
</gene>
<organism>
    <name type="scientific">Escherichia coli (strain K12)</name>
    <dbReference type="NCBI Taxonomy" id="83333"/>
    <lineage>
        <taxon>Bacteria</taxon>
        <taxon>Pseudomonadati</taxon>
        <taxon>Pseudomonadota</taxon>
        <taxon>Gammaproteobacteria</taxon>
        <taxon>Enterobacterales</taxon>
        <taxon>Enterobacteriaceae</taxon>
        <taxon>Escherichia</taxon>
    </lineage>
</organism>
<keyword id="KW-0002">3D-structure</keyword>
<keyword id="KW-0067">ATP-binding</keyword>
<keyword id="KW-0903">Direct protein sequencing</keyword>
<keyword id="KW-0418">Kinase</keyword>
<keyword id="KW-0460">Magnesium</keyword>
<keyword id="KW-0547">Nucleotide-binding</keyword>
<keyword id="KW-0660">Purine salvage</keyword>
<keyword id="KW-1185">Reference proteome</keyword>
<keyword id="KW-0808">Transferase</keyword>
<protein>
    <recommendedName>
        <fullName evidence="1 7 8">Guanosine-inosine kinase</fullName>
        <ecNumber evidence="1 2 5">2.7.1.73</ecNumber>
    </recommendedName>
</protein>